<proteinExistence type="evidence at transcript level"/>
<dbReference type="EMBL" id="BC088107">
    <property type="protein sequence ID" value="AAH88107.1"/>
    <property type="molecule type" value="mRNA"/>
</dbReference>
<dbReference type="RefSeq" id="NP_742007.2">
    <property type="nucleotide sequence ID" value="NM_172010.2"/>
</dbReference>
<dbReference type="SMR" id="Q5M8C6"/>
<dbReference type="FunCoup" id="Q5M8C6">
    <property type="interactions" value="12"/>
</dbReference>
<dbReference type="STRING" id="10116.ENSRNOP00000073912"/>
<dbReference type="PhosphoSitePlus" id="Q5M8C6"/>
<dbReference type="PaxDb" id="10116-ENSRNOP00000014248"/>
<dbReference type="Ensembl" id="ENSRNOT00000014248.7">
    <property type="protein sequence ID" value="ENSRNOP00000014248.7"/>
    <property type="gene ID" value="ENSRNOG00000010714.8"/>
</dbReference>
<dbReference type="GeneID" id="246186"/>
<dbReference type="KEGG" id="rno:246186"/>
<dbReference type="AGR" id="RGD:620169"/>
<dbReference type="CTD" id="2267"/>
<dbReference type="RGD" id="620169">
    <property type="gene designation" value="Fgl1"/>
</dbReference>
<dbReference type="eggNOG" id="KOG2579">
    <property type="taxonomic scope" value="Eukaryota"/>
</dbReference>
<dbReference type="InParanoid" id="Q5M8C6"/>
<dbReference type="OMA" id="ASHQGIK"/>
<dbReference type="OrthoDB" id="7725475at2759"/>
<dbReference type="PhylomeDB" id="Q5M8C6"/>
<dbReference type="PRO" id="PR:Q5M8C6"/>
<dbReference type="Proteomes" id="UP000002494">
    <property type="component" value="Chromosome 16"/>
</dbReference>
<dbReference type="Bgee" id="ENSRNOG00000010714">
    <property type="expression patterns" value="Expressed in liver and 12 other cell types or tissues"/>
</dbReference>
<dbReference type="ExpressionAtlas" id="Q5M8C6">
    <property type="expression patterns" value="baseline and differential"/>
</dbReference>
<dbReference type="GO" id="GO:0062023">
    <property type="term" value="C:collagen-containing extracellular matrix"/>
    <property type="evidence" value="ECO:0000318"/>
    <property type="project" value="GO_Central"/>
</dbReference>
<dbReference type="GO" id="GO:0005576">
    <property type="term" value="C:extracellular region"/>
    <property type="evidence" value="ECO:0000250"/>
    <property type="project" value="UniProtKB"/>
</dbReference>
<dbReference type="GO" id="GO:0005615">
    <property type="term" value="C:extracellular space"/>
    <property type="evidence" value="ECO:0000318"/>
    <property type="project" value="GO_Central"/>
</dbReference>
<dbReference type="GO" id="GO:0042802">
    <property type="term" value="F:identical protein binding"/>
    <property type="evidence" value="ECO:0000266"/>
    <property type="project" value="RGD"/>
</dbReference>
<dbReference type="GO" id="GO:0002250">
    <property type="term" value="P:adaptive immune response"/>
    <property type="evidence" value="ECO:0007669"/>
    <property type="project" value="UniProtKB-KW"/>
</dbReference>
<dbReference type="GO" id="GO:0060612">
    <property type="term" value="P:adipose tissue development"/>
    <property type="evidence" value="ECO:0000266"/>
    <property type="project" value="RGD"/>
</dbReference>
<dbReference type="GO" id="GO:0007596">
    <property type="term" value="P:blood coagulation"/>
    <property type="evidence" value="ECO:0007669"/>
    <property type="project" value="InterPro"/>
</dbReference>
<dbReference type="GO" id="GO:0008203">
    <property type="term" value="P:cholesterol metabolic process"/>
    <property type="evidence" value="ECO:0000266"/>
    <property type="project" value="RGD"/>
</dbReference>
<dbReference type="GO" id="GO:0072574">
    <property type="term" value="P:hepatocyte proliferation"/>
    <property type="evidence" value="ECO:0000250"/>
    <property type="project" value="UniProtKB"/>
</dbReference>
<dbReference type="GO" id="GO:0050868">
    <property type="term" value="P:negative regulation of T cell activation"/>
    <property type="evidence" value="ECO:0000250"/>
    <property type="project" value="UniProtKB"/>
</dbReference>
<dbReference type="GO" id="GO:0010906">
    <property type="term" value="P:regulation of glucose metabolic process"/>
    <property type="evidence" value="ECO:0000266"/>
    <property type="project" value="RGD"/>
</dbReference>
<dbReference type="GO" id="GO:0050776">
    <property type="term" value="P:regulation of immune response"/>
    <property type="evidence" value="ECO:0000250"/>
    <property type="project" value="UniProtKB"/>
</dbReference>
<dbReference type="GO" id="GO:0035634">
    <property type="term" value="P:response to stilbenoid"/>
    <property type="evidence" value="ECO:0000266"/>
    <property type="project" value="RGD"/>
</dbReference>
<dbReference type="CDD" id="cd00087">
    <property type="entry name" value="FReD"/>
    <property type="match status" value="1"/>
</dbReference>
<dbReference type="FunFam" id="3.90.215.10:FF:000013">
    <property type="entry name" value="Fibrinogen-like protein 1"/>
    <property type="match status" value="1"/>
</dbReference>
<dbReference type="Gene3D" id="3.90.215.10">
    <property type="entry name" value="Gamma Fibrinogen, chain A, domain 1"/>
    <property type="match status" value="1"/>
</dbReference>
<dbReference type="Gene3D" id="4.10.530.10">
    <property type="entry name" value="Gamma-fibrinogen Carboxyl Terminal Fragment, domain 2"/>
    <property type="match status" value="1"/>
</dbReference>
<dbReference type="InterPro" id="IPR037579">
    <property type="entry name" value="FIB_ANG-like"/>
</dbReference>
<dbReference type="InterPro" id="IPR036056">
    <property type="entry name" value="Fibrinogen-like_C"/>
</dbReference>
<dbReference type="InterPro" id="IPR014716">
    <property type="entry name" value="Fibrinogen_a/b/g_C_1"/>
</dbReference>
<dbReference type="InterPro" id="IPR002181">
    <property type="entry name" value="Fibrinogen_a/b/g_C_dom"/>
</dbReference>
<dbReference type="InterPro" id="IPR020837">
    <property type="entry name" value="Fibrinogen_CS"/>
</dbReference>
<dbReference type="NCBIfam" id="NF040941">
    <property type="entry name" value="GGGWT_bact"/>
    <property type="match status" value="1"/>
</dbReference>
<dbReference type="PANTHER" id="PTHR47221">
    <property type="entry name" value="FIBRINOGEN ALPHA CHAIN"/>
    <property type="match status" value="1"/>
</dbReference>
<dbReference type="PANTHER" id="PTHR47221:SF8">
    <property type="entry name" value="FIBRINOGEN LIKE 1A"/>
    <property type="match status" value="1"/>
</dbReference>
<dbReference type="Pfam" id="PF00147">
    <property type="entry name" value="Fibrinogen_C"/>
    <property type="match status" value="1"/>
</dbReference>
<dbReference type="SMART" id="SM00186">
    <property type="entry name" value="FBG"/>
    <property type="match status" value="1"/>
</dbReference>
<dbReference type="SUPFAM" id="SSF56496">
    <property type="entry name" value="Fibrinogen C-terminal domain-like"/>
    <property type="match status" value="1"/>
</dbReference>
<dbReference type="PROSITE" id="PS00514">
    <property type="entry name" value="FIBRINOGEN_C_1"/>
    <property type="match status" value="1"/>
</dbReference>
<dbReference type="PROSITE" id="PS51406">
    <property type="entry name" value="FIBRINOGEN_C_2"/>
    <property type="match status" value="1"/>
</dbReference>
<feature type="signal peptide" evidence="1">
    <location>
        <begin position="1"/>
        <end position="22"/>
    </location>
</feature>
<feature type="chain" id="PRO_0000322980" description="Fibrinogen-like protein 1">
    <location>
        <begin position="23"/>
        <end position="314"/>
    </location>
</feature>
<feature type="domain" description="Fibrinogen C-terminal" evidence="3">
    <location>
        <begin position="76"/>
        <end position="308"/>
    </location>
</feature>
<feature type="coiled-coil region" evidence="2">
    <location>
        <begin position="28"/>
        <end position="62"/>
    </location>
</feature>
<feature type="disulfide bond" description="Interchain" evidence="3">
    <location>
        <position position="28"/>
    </location>
</feature>
<feature type="disulfide bond" evidence="3">
    <location>
        <begin position="85"/>
        <end position="114"/>
    </location>
</feature>
<feature type="disulfide bond" evidence="3">
    <location>
        <begin position="250"/>
        <end position="263"/>
    </location>
</feature>
<accession>Q5M8C6</accession>
<reference key="1">
    <citation type="journal article" date="2004" name="Genome Res.">
        <title>The status, quality, and expansion of the NIH full-length cDNA project: the Mammalian Gene Collection (MGC).</title>
        <authorList>
            <consortium name="The MGC Project Team"/>
        </authorList>
    </citation>
    <scope>NUCLEOTIDE SEQUENCE [LARGE SCALE MRNA]</scope>
    <source>
        <tissue>Liver</tissue>
    </source>
</reference>
<reference key="2">
    <citation type="journal article" date="2008" name="Biochem. Biophys. Res. Commun.">
        <title>Fibrinogen-like protein 1, a hepatocyte derived protein is an acute phase reactant.</title>
        <authorList>
            <person name="Liu Z."/>
            <person name="Ukomadu C."/>
        </authorList>
    </citation>
    <scope>SUBCELLULAR LOCATION</scope>
</reference>
<evidence type="ECO:0000250" key="1">
    <source>
        <dbReference type="UniProtKB" id="Q08830"/>
    </source>
</evidence>
<evidence type="ECO:0000255" key="2"/>
<evidence type="ECO:0000255" key="3">
    <source>
        <dbReference type="PROSITE-ProRule" id="PRU00739"/>
    </source>
</evidence>
<evidence type="ECO:0000269" key="4">
    <source>
    </source>
</evidence>
<evidence type="ECO:0000303" key="5">
    <source>
    </source>
</evidence>
<evidence type="ECO:0000312" key="6">
    <source>
        <dbReference type="RGD" id="620169"/>
    </source>
</evidence>
<protein>
    <recommendedName>
        <fullName evidence="5">Fibrinogen-like protein 1</fullName>
    </recommendedName>
</protein>
<comment type="function">
    <text evidence="1">Immune suppressive molecule that inhibits antigen-specific T-cell activation by acting as a major ligand of LAG3. Responsible for LAG3 T-cell inhibitory function. Binds LAG3 independently from MHC class II (MHC-II). Secreted by, and promotes growth of, hepatocytes.</text>
</comment>
<comment type="subunit">
    <text evidence="1">Homodimer. Interacts (via the Fibrinogen C-terminal domain) with LAG3 (via Ig-like domains 1 and 2).</text>
</comment>
<comment type="subcellular location">
    <subcellularLocation>
        <location evidence="4">Secreted</location>
    </subcellularLocation>
    <text evidence="4">Secreted in the blood plasma.</text>
</comment>
<organism>
    <name type="scientific">Rattus norvegicus</name>
    <name type="common">Rat</name>
    <dbReference type="NCBI Taxonomy" id="10116"/>
    <lineage>
        <taxon>Eukaryota</taxon>
        <taxon>Metazoa</taxon>
        <taxon>Chordata</taxon>
        <taxon>Craniata</taxon>
        <taxon>Vertebrata</taxon>
        <taxon>Euteleostomi</taxon>
        <taxon>Mammalia</taxon>
        <taxon>Eutheria</taxon>
        <taxon>Euarchontoglires</taxon>
        <taxon>Glires</taxon>
        <taxon>Rodentia</taxon>
        <taxon>Myomorpha</taxon>
        <taxon>Muroidea</taxon>
        <taxon>Muridae</taxon>
        <taxon>Murinae</taxon>
        <taxon>Rattus</taxon>
    </lineage>
</organism>
<name>FGL1_RAT</name>
<sequence length="314" mass="36476">MGEIRSFVLITVALILGKESWVLGDENCLQEQVRLRAQVRQLETRVKQQQVVIAQLLHEKEVQFLDRGQEDSFIDLGGKRHYADCSEIYNDGFKHSGFYKIKPLQSLAEFSVYCDMSDGGGWTVIQRRSDGSENFNRGWNDYENGFGNFVQSNGEYWLGNKNINLLTMQGDYTLKIDLTDFEKNSRFAQYEKFKVGDEKSFYELNIGEYSGTAGDSLSGTFHPEVQWWASHQTMKFSTRDRDNDNYNGNCAEEEQSGWWFNRCHSANLNGVYYQGPYRAETDNGVVWYTWRGWWYSLKSVVMKIRPSDFIPNIV</sequence>
<keyword id="KW-1064">Adaptive immunity</keyword>
<keyword id="KW-0175">Coiled coil</keyword>
<keyword id="KW-1015">Disulfide bond</keyword>
<keyword id="KW-0391">Immunity</keyword>
<keyword id="KW-1185">Reference proteome</keyword>
<keyword id="KW-0964">Secreted</keyword>
<keyword id="KW-0732">Signal</keyword>
<gene>
    <name evidence="5 6" type="primary">Fgl1</name>
</gene>